<organism>
    <name type="scientific">Pecten maximus</name>
    <name type="common">King scallop</name>
    <name type="synonym">Pilgrim's clam</name>
    <dbReference type="NCBI Taxonomy" id="6579"/>
    <lineage>
        <taxon>Eukaryota</taxon>
        <taxon>Metazoa</taxon>
        <taxon>Spiralia</taxon>
        <taxon>Lophotrochozoa</taxon>
        <taxon>Mollusca</taxon>
        <taxon>Bivalvia</taxon>
        <taxon>Autobranchia</taxon>
        <taxon>Pteriomorphia</taxon>
        <taxon>Pectinida</taxon>
        <taxon>Pectinoidea</taxon>
        <taxon>Pectinidae</taxon>
        <taxon>Pecten</taxon>
    </lineage>
</organism>
<dbReference type="EC" id="7.1.1.9"/>
<dbReference type="EMBL" id="X92688">
    <property type="protein sequence ID" value="CAA63370.1"/>
    <property type="molecule type" value="Genomic_DNA"/>
</dbReference>
<dbReference type="SMR" id="Q96000"/>
<dbReference type="OrthoDB" id="6113578at2759"/>
<dbReference type="UniPathway" id="UPA00705"/>
<dbReference type="GO" id="GO:0005743">
    <property type="term" value="C:mitochondrial inner membrane"/>
    <property type="evidence" value="ECO:0007669"/>
    <property type="project" value="UniProtKB-SubCell"/>
</dbReference>
<dbReference type="GO" id="GO:0045277">
    <property type="term" value="C:respiratory chain complex IV"/>
    <property type="evidence" value="ECO:0007669"/>
    <property type="project" value="InterPro"/>
</dbReference>
<dbReference type="GO" id="GO:0004129">
    <property type="term" value="F:cytochrome-c oxidase activity"/>
    <property type="evidence" value="ECO:0007669"/>
    <property type="project" value="UniProtKB-EC"/>
</dbReference>
<dbReference type="GO" id="GO:0020037">
    <property type="term" value="F:heme binding"/>
    <property type="evidence" value="ECO:0007669"/>
    <property type="project" value="InterPro"/>
</dbReference>
<dbReference type="GO" id="GO:0046872">
    <property type="term" value="F:metal ion binding"/>
    <property type="evidence" value="ECO:0007669"/>
    <property type="project" value="UniProtKB-KW"/>
</dbReference>
<dbReference type="GO" id="GO:0015990">
    <property type="term" value="P:electron transport coupled proton transport"/>
    <property type="evidence" value="ECO:0007669"/>
    <property type="project" value="TreeGrafter"/>
</dbReference>
<dbReference type="GO" id="GO:0006123">
    <property type="term" value="P:mitochondrial electron transport, cytochrome c to oxygen"/>
    <property type="evidence" value="ECO:0007669"/>
    <property type="project" value="TreeGrafter"/>
</dbReference>
<dbReference type="CDD" id="cd01663">
    <property type="entry name" value="Cyt_c_Oxidase_I"/>
    <property type="match status" value="1"/>
</dbReference>
<dbReference type="Gene3D" id="1.20.210.10">
    <property type="entry name" value="Cytochrome c oxidase-like, subunit I domain"/>
    <property type="match status" value="1"/>
</dbReference>
<dbReference type="InterPro" id="IPR023616">
    <property type="entry name" value="Cyt_c_oxase-like_su1_dom"/>
</dbReference>
<dbReference type="InterPro" id="IPR036927">
    <property type="entry name" value="Cyt_c_oxase-like_su1_sf"/>
</dbReference>
<dbReference type="InterPro" id="IPR000883">
    <property type="entry name" value="Cyt_C_Oxase_1"/>
</dbReference>
<dbReference type="InterPro" id="IPR023615">
    <property type="entry name" value="Cyt_c_Oxase_su1_BS"/>
</dbReference>
<dbReference type="InterPro" id="IPR033944">
    <property type="entry name" value="Cyt_c_oxase_su1_dom"/>
</dbReference>
<dbReference type="PANTHER" id="PTHR10422">
    <property type="entry name" value="CYTOCHROME C OXIDASE SUBUNIT 1"/>
    <property type="match status" value="1"/>
</dbReference>
<dbReference type="PANTHER" id="PTHR10422:SF18">
    <property type="entry name" value="CYTOCHROME C OXIDASE SUBUNIT 1"/>
    <property type="match status" value="1"/>
</dbReference>
<dbReference type="Pfam" id="PF00115">
    <property type="entry name" value="COX1"/>
    <property type="match status" value="1"/>
</dbReference>
<dbReference type="PRINTS" id="PR01165">
    <property type="entry name" value="CYCOXIDASEI"/>
</dbReference>
<dbReference type="SUPFAM" id="SSF81442">
    <property type="entry name" value="Cytochrome c oxidase subunit I-like"/>
    <property type="match status" value="1"/>
</dbReference>
<dbReference type="PROSITE" id="PS50855">
    <property type="entry name" value="COX1"/>
    <property type="match status" value="1"/>
</dbReference>
<dbReference type="PROSITE" id="PS00077">
    <property type="entry name" value="COX1_CUB"/>
    <property type="match status" value="1"/>
</dbReference>
<comment type="function">
    <text evidence="2">Component of the cytochrome c oxidase, the last enzyme in the mitochondrial electron transport chain which drives oxidative phosphorylation. The respiratory chain contains 3 multisubunit complexes succinate dehydrogenase (complex II, CII), ubiquinol-cytochrome c oxidoreductase (cytochrome b-c1 complex, complex III, CIII) and cytochrome c oxidase (complex IV, CIV), that cooperate to transfer electrons derived from NADH and succinate to molecular oxygen, creating an electrochemical gradient over the inner membrane that drives transmembrane transport and the ATP synthase. Cytochrome c oxidase is the component of the respiratory chain that catalyzes the reduction of oxygen to water. Electrons originating from reduced cytochrome c in the intermembrane space (IMS) are transferred via the dinuclear copper A center (CU(A)) of subunit 2 and heme A of subunit 1 to the active site in subunit 1, a binuclear center (BNC) formed by heme A3 and copper B (CU(B)). The BNC reduces molecular oxygen to 2 water molecules using 4 electrons from cytochrome c in the IMS and 4 protons from the mitochondrial matrix.</text>
</comment>
<comment type="catalytic activity">
    <reaction evidence="2">
        <text>4 Fe(II)-[cytochrome c] + O2 + 8 H(+)(in) = 4 Fe(III)-[cytochrome c] + 2 H2O + 4 H(+)(out)</text>
        <dbReference type="Rhea" id="RHEA:11436"/>
        <dbReference type="Rhea" id="RHEA-COMP:10350"/>
        <dbReference type="Rhea" id="RHEA-COMP:14399"/>
        <dbReference type="ChEBI" id="CHEBI:15377"/>
        <dbReference type="ChEBI" id="CHEBI:15378"/>
        <dbReference type="ChEBI" id="CHEBI:15379"/>
        <dbReference type="ChEBI" id="CHEBI:29033"/>
        <dbReference type="ChEBI" id="CHEBI:29034"/>
        <dbReference type="EC" id="7.1.1.9"/>
    </reaction>
    <physiologicalReaction direction="left-to-right" evidence="2">
        <dbReference type="Rhea" id="RHEA:11437"/>
    </physiologicalReaction>
</comment>
<comment type="cofactor">
    <cofactor evidence="2">
        <name>heme</name>
        <dbReference type="ChEBI" id="CHEBI:30413"/>
    </cofactor>
    <text evidence="2">Binds 2 heme A groups non-covalently per subunit.</text>
</comment>
<comment type="cofactor">
    <cofactor evidence="2">
        <name>Cu cation</name>
        <dbReference type="ChEBI" id="CHEBI:23378"/>
    </cofactor>
    <text evidence="2">Binds a copper B center.</text>
</comment>
<comment type="pathway">
    <text evidence="2">Energy metabolism; oxidative phosphorylation.</text>
</comment>
<comment type="subunit">
    <text evidence="2">Component of the cytochrome c oxidase (complex IV, CIV), a multisubunit enzyme composed of a catalytic core of 3 subunits and several supernumerary subunits. The complex exists as a monomer or a dimer and forms supercomplexes (SCs) in the inner mitochondrial membrane with ubiquinol-cytochrome c oxidoreductase (cytochrome b-c1 complex, complex III, CIII).</text>
</comment>
<comment type="subcellular location">
    <subcellularLocation>
        <location evidence="2">Mitochondrion inner membrane</location>
        <topology evidence="2">Multi-pass membrane protein</topology>
    </subcellularLocation>
</comment>
<comment type="similarity">
    <text evidence="4">Belongs to the heme-copper respiratory oxidase family.</text>
</comment>
<name>COX1_PECMA</name>
<proteinExistence type="inferred from homology"/>
<feature type="chain" id="PRO_0000183385" description="Cytochrome c oxidase subunit 1">
    <location>
        <begin position="1"/>
        <end position="477" status="greater than"/>
    </location>
</feature>
<feature type="transmembrane region" description="Helical" evidence="3">
    <location>
        <begin position="16"/>
        <end position="36"/>
    </location>
</feature>
<feature type="transmembrane region" description="Helical" evidence="3">
    <location>
        <begin position="64"/>
        <end position="84"/>
    </location>
</feature>
<feature type="transmembrane region" description="Helical" evidence="3">
    <location>
        <begin position="101"/>
        <end position="121"/>
    </location>
</feature>
<feature type="transmembrane region" description="Helical" evidence="3">
    <location>
        <begin position="149"/>
        <end position="171"/>
    </location>
</feature>
<feature type="transmembrane region" description="Helical" evidence="3">
    <location>
        <begin position="185"/>
        <end position="205"/>
    </location>
</feature>
<feature type="transmembrane region" description="Helical" evidence="3">
    <location>
        <begin position="236"/>
        <end position="256"/>
    </location>
</feature>
<feature type="transmembrane region" description="Helical" evidence="3">
    <location>
        <begin position="269"/>
        <end position="289"/>
    </location>
</feature>
<feature type="transmembrane region" description="Helical" evidence="3">
    <location>
        <begin position="309"/>
        <end position="329"/>
    </location>
</feature>
<feature type="transmembrane region" description="Helical" evidence="3">
    <location>
        <begin position="340"/>
        <end position="360"/>
    </location>
</feature>
<feature type="transmembrane region" description="Helical" evidence="3">
    <location>
        <begin position="382"/>
        <end position="402"/>
    </location>
</feature>
<feature type="transmembrane region" description="Helical" evidence="3">
    <location>
        <begin position="416"/>
        <end position="436"/>
    </location>
</feature>
<feature type="transmembrane region" description="Helical" evidence="3">
    <location>
        <begin position="455"/>
        <end position="475"/>
    </location>
</feature>
<feature type="binding site" evidence="2">
    <location>
        <position position="41"/>
    </location>
    <ligand>
        <name>Ca(2+)</name>
        <dbReference type="ChEBI" id="CHEBI:29108"/>
    </ligand>
</feature>
<feature type="binding site" evidence="2">
    <location>
        <position position="46"/>
    </location>
    <ligand>
        <name>Ca(2+)</name>
        <dbReference type="ChEBI" id="CHEBI:29108"/>
    </ligand>
</feature>
<feature type="binding site" description="axial binding residue" evidence="2">
    <location>
        <position position="62"/>
    </location>
    <ligand>
        <name>Fe(II)-heme a</name>
        <dbReference type="ChEBI" id="CHEBI:61715"/>
        <note>low-spin</note>
    </ligand>
    <ligandPart>
        <name>Fe</name>
        <dbReference type="ChEBI" id="CHEBI:18248"/>
    </ligandPart>
</feature>
<feature type="binding site" evidence="2">
    <location>
        <position position="242"/>
    </location>
    <ligand>
        <name>Cu cation</name>
        <dbReference type="ChEBI" id="CHEBI:23378"/>
        <label>B</label>
    </ligand>
</feature>
<feature type="binding site" evidence="1">
    <location>
        <position position="246"/>
    </location>
    <ligand>
        <name>O2</name>
        <dbReference type="ChEBI" id="CHEBI:15379"/>
    </ligand>
</feature>
<feature type="binding site" evidence="2">
    <location>
        <position position="292"/>
    </location>
    <ligand>
        <name>Cu cation</name>
        <dbReference type="ChEBI" id="CHEBI:23378"/>
        <label>B</label>
    </ligand>
</feature>
<feature type="binding site" evidence="2">
    <location>
        <position position="293"/>
    </location>
    <ligand>
        <name>Cu cation</name>
        <dbReference type="ChEBI" id="CHEBI:23378"/>
        <label>B</label>
    </ligand>
</feature>
<feature type="binding site" evidence="2">
    <location>
        <position position="370"/>
    </location>
    <ligand>
        <name>Mg(2+)</name>
        <dbReference type="ChEBI" id="CHEBI:18420"/>
        <note>ligand shared with subunit 2</note>
    </ligand>
</feature>
<feature type="binding site" evidence="2">
    <location>
        <position position="371"/>
    </location>
    <ligand>
        <name>Mg(2+)</name>
        <dbReference type="ChEBI" id="CHEBI:18420"/>
        <note>ligand shared with subunit 2</note>
    </ligand>
</feature>
<feature type="binding site" description="axial binding residue" evidence="2">
    <location>
        <position position="378"/>
    </location>
    <ligand>
        <name>heme a3</name>
        <dbReference type="ChEBI" id="CHEBI:83282"/>
        <note>high-spin</note>
    </ligand>
    <ligandPart>
        <name>Fe</name>
        <dbReference type="ChEBI" id="CHEBI:18248"/>
    </ligandPart>
</feature>
<feature type="binding site" description="axial binding residue" evidence="2">
    <location>
        <position position="380"/>
    </location>
    <ligand>
        <name>Fe(II)-heme a</name>
        <dbReference type="ChEBI" id="CHEBI:61715"/>
        <note>low-spin</note>
    </ligand>
    <ligandPart>
        <name>Fe</name>
        <dbReference type="ChEBI" id="CHEBI:18248"/>
    </ligandPart>
</feature>
<feature type="binding site" evidence="2">
    <location>
        <position position="443"/>
    </location>
    <ligand>
        <name>Ca(2+)</name>
        <dbReference type="ChEBI" id="CHEBI:29108"/>
    </ligand>
</feature>
<feature type="cross-link" description="1'-histidyl-3'-tyrosine (His-Tyr)" evidence="2">
    <location>
        <begin position="242"/>
        <end position="246"/>
    </location>
</feature>
<feature type="non-terminal residue">
    <location>
        <position position="477"/>
    </location>
</feature>
<protein>
    <recommendedName>
        <fullName>Cytochrome c oxidase subunit 1</fullName>
        <ecNumber>7.1.1.9</ecNumber>
    </recommendedName>
    <alternativeName>
        <fullName>Cytochrome c oxidase polypeptide I</fullName>
    </alternativeName>
</protein>
<accession>Q96000</accession>
<sequence>MVRWSRWFMANSHKDVGTMYLMLGMWSGFGGLNLSWMMRLELSRPGMWLPSSEVYNGIVTLHAIMMIFSFVMPVLIGGFGNWLLPMMLGSIDMSFPRLNTFSFWVLPPALYLVIVSCFIDYGSGTGWTMYPVPLSSTPYSGGISTDLMILGLHLAGISSSAESINYLVTFLNVRSKSFKAEFSPLFVWALAVTSFLLLVSLPVLAGGLTMLIMDRDFNCSFFDPSGGGDPVLFQHLFWFFGHPEVYVLILPGFGLVSHVLVFYTKKLRVFGSVAMMYAMISIGVLGFIVWGHHMYTVGLDVDTRFYFTAVTMLIAVPTGVKVFSWIATIYGSYLSFEAPTLWVLGFIMKFTMGGITGVILSNACLDVALHDTYYVVAHFHYVLSMGAVFTIFAGYIHYFPFFTSKLFSPVLARGHFFLTFVGVNLTFFPQHFLGLGGMPRRIPDYPIFYYYWNQWSTIGCAMVMVSVSLFIHMQWEA</sequence>
<evidence type="ECO:0000250" key="1">
    <source>
        <dbReference type="UniProtKB" id="P00396"/>
    </source>
</evidence>
<evidence type="ECO:0000250" key="2">
    <source>
        <dbReference type="UniProtKB" id="P00401"/>
    </source>
</evidence>
<evidence type="ECO:0000255" key="3"/>
<evidence type="ECO:0000305" key="4"/>
<reference key="1">
    <citation type="journal article" date="1995" name="J. Mol. Evol.">
        <title>Molecular cloning and complete nucleotide sequence of the repeated unit and flanking gene of the scallop Pecten maximus mitochondrial DNA: putative replication origin features.</title>
        <authorList>
            <person name="Rigaa A."/>
            <person name="Monnerot M."/>
            <person name="Sellos D."/>
        </authorList>
    </citation>
    <scope>NUCLEOTIDE SEQUENCE [GENOMIC DNA]</scope>
    <source>
        <tissue>Muscle</tissue>
    </source>
</reference>
<gene>
    <name type="primary">COI</name>
</gene>
<geneLocation type="mitochondrion"/>
<keyword id="KW-0106">Calcium</keyword>
<keyword id="KW-0186">Copper</keyword>
<keyword id="KW-0249">Electron transport</keyword>
<keyword id="KW-0349">Heme</keyword>
<keyword id="KW-0408">Iron</keyword>
<keyword id="KW-0460">Magnesium</keyword>
<keyword id="KW-0472">Membrane</keyword>
<keyword id="KW-0479">Metal-binding</keyword>
<keyword id="KW-0496">Mitochondrion</keyword>
<keyword id="KW-0999">Mitochondrion inner membrane</keyword>
<keyword id="KW-0679">Respiratory chain</keyword>
<keyword id="KW-1278">Translocase</keyword>
<keyword id="KW-0812">Transmembrane</keyword>
<keyword id="KW-1133">Transmembrane helix</keyword>
<keyword id="KW-0813">Transport</keyword>